<gene>
    <name type="ordered locus">Npun_R6513</name>
</gene>
<evidence type="ECO:0000255" key="1"/>
<evidence type="ECO:0000255" key="2">
    <source>
        <dbReference type="PROSITE-ProRule" id="PRU01055"/>
    </source>
</evidence>
<evidence type="ECO:0000269" key="3">
    <source>
    </source>
</evidence>
<evidence type="ECO:0000269" key="4">
    <source>
    </source>
</evidence>
<evidence type="ECO:0000303" key="5">
    <source>
    </source>
</evidence>
<evidence type="ECO:0000305" key="6">
    <source>
    </source>
</evidence>
<evidence type="ECO:0000305" key="7">
    <source>
    </source>
</evidence>
<evidence type="ECO:0007744" key="8">
    <source>
        <dbReference type="PDB" id="2J68"/>
    </source>
</evidence>
<evidence type="ECO:0007744" key="9">
    <source>
        <dbReference type="PDB" id="2J69"/>
    </source>
</evidence>
<evidence type="ECO:0007744" key="10">
    <source>
        <dbReference type="PDB" id="2W6D"/>
    </source>
</evidence>
<evidence type="ECO:0007829" key="11">
    <source>
        <dbReference type="PDB" id="2J68"/>
    </source>
</evidence>
<evidence type="ECO:0007829" key="12">
    <source>
        <dbReference type="PDB" id="2J69"/>
    </source>
</evidence>
<dbReference type="EC" id="3.6.5.5" evidence="3"/>
<dbReference type="EMBL" id="CP001037">
    <property type="protein sequence ID" value="ACC84775.1"/>
    <property type="molecule type" value="Genomic_DNA"/>
</dbReference>
<dbReference type="RefSeq" id="WP_012412711.1">
    <property type="nucleotide sequence ID" value="NC_010628.1"/>
</dbReference>
<dbReference type="PDB" id="2J68">
    <property type="method" value="X-ray"/>
    <property type="resolution" value="3.10 A"/>
    <property type="chains" value="A=1-693"/>
</dbReference>
<dbReference type="PDB" id="2J69">
    <property type="method" value="X-ray"/>
    <property type="resolution" value="3.00 A"/>
    <property type="chains" value="A/B/C/D=1-693"/>
</dbReference>
<dbReference type="PDB" id="2W6D">
    <property type="method" value="EM"/>
    <property type="resolution" value="9.00 A"/>
    <property type="chains" value="A/B=1-693"/>
</dbReference>
<dbReference type="PDBsum" id="2J68"/>
<dbReference type="PDBsum" id="2J69"/>
<dbReference type="PDBsum" id="2W6D"/>
<dbReference type="EMDB" id="EMD-1589"/>
<dbReference type="SMR" id="B2IZD3"/>
<dbReference type="DIP" id="DIP-60443N"/>
<dbReference type="STRING" id="63737.Npun_R6513"/>
<dbReference type="EnsemblBacteria" id="ACC84775">
    <property type="protein sequence ID" value="ACC84775"/>
    <property type="gene ID" value="Npun_R6513"/>
</dbReference>
<dbReference type="KEGG" id="npu:Npun_R6513"/>
<dbReference type="eggNOG" id="COG0699">
    <property type="taxonomic scope" value="Bacteria"/>
</dbReference>
<dbReference type="HOGENOM" id="CLU_025039_0_0_3"/>
<dbReference type="OrthoDB" id="5477114at2"/>
<dbReference type="PhylomeDB" id="B2IZD3"/>
<dbReference type="EvolutionaryTrace" id="B2IZD3"/>
<dbReference type="Proteomes" id="UP000001191">
    <property type="component" value="Chromosome"/>
</dbReference>
<dbReference type="GO" id="GO:0005886">
    <property type="term" value="C:plasma membrane"/>
    <property type="evidence" value="ECO:0007669"/>
    <property type="project" value="UniProtKB-SubCell"/>
</dbReference>
<dbReference type="GO" id="GO:0005525">
    <property type="term" value="F:GTP binding"/>
    <property type="evidence" value="ECO:0000314"/>
    <property type="project" value="UniProtKB"/>
</dbReference>
<dbReference type="GO" id="GO:0003924">
    <property type="term" value="F:GTPase activity"/>
    <property type="evidence" value="ECO:0000314"/>
    <property type="project" value="UniProtKB"/>
</dbReference>
<dbReference type="GO" id="GO:0042802">
    <property type="term" value="F:identical protein binding"/>
    <property type="evidence" value="ECO:0000353"/>
    <property type="project" value="IntAct"/>
</dbReference>
<dbReference type="GO" id="GO:0008289">
    <property type="term" value="F:lipid binding"/>
    <property type="evidence" value="ECO:0000314"/>
    <property type="project" value="UniProtKB"/>
</dbReference>
<dbReference type="GO" id="GO:0008053">
    <property type="term" value="P:mitochondrial fusion"/>
    <property type="evidence" value="ECO:0007669"/>
    <property type="project" value="TreeGrafter"/>
</dbReference>
<dbReference type="CDD" id="cd09912">
    <property type="entry name" value="DLP_2"/>
    <property type="match status" value="1"/>
</dbReference>
<dbReference type="FunFam" id="3.40.50.300:FF:001670">
    <property type="entry name" value="Dynamin family protein"/>
    <property type="match status" value="1"/>
</dbReference>
<dbReference type="Gene3D" id="3.40.50.300">
    <property type="entry name" value="P-loop containing nucleotide triphosphate hydrolases"/>
    <property type="match status" value="1"/>
</dbReference>
<dbReference type="InterPro" id="IPR049399">
    <property type="entry name" value="BDLP-like_hel"/>
</dbReference>
<dbReference type="InterPro" id="IPR045063">
    <property type="entry name" value="Dynamin_N"/>
</dbReference>
<dbReference type="InterPro" id="IPR030381">
    <property type="entry name" value="G_DYNAMIN_dom"/>
</dbReference>
<dbReference type="InterPro" id="IPR027094">
    <property type="entry name" value="Mitofusin_fam"/>
</dbReference>
<dbReference type="InterPro" id="IPR027417">
    <property type="entry name" value="P-loop_NTPase"/>
</dbReference>
<dbReference type="PANTHER" id="PTHR10465:SF0">
    <property type="entry name" value="SARCALUMENIN"/>
    <property type="match status" value="1"/>
</dbReference>
<dbReference type="PANTHER" id="PTHR10465">
    <property type="entry name" value="TRANSMEMBRANE GTPASE FZO1"/>
    <property type="match status" value="1"/>
</dbReference>
<dbReference type="Pfam" id="PF21808">
    <property type="entry name" value="Dynamin-like_hel_bact"/>
    <property type="match status" value="1"/>
</dbReference>
<dbReference type="Pfam" id="PF00350">
    <property type="entry name" value="Dynamin_N"/>
    <property type="match status" value="1"/>
</dbReference>
<dbReference type="SUPFAM" id="SSF52540">
    <property type="entry name" value="P-loop containing nucleoside triphosphate hydrolases"/>
    <property type="match status" value="1"/>
</dbReference>
<dbReference type="PROSITE" id="PS51718">
    <property type="entry name" value="G_DYNAMIN_2"/>
    <property type="match status" value="1"/>
</dbReference>
<keyword id="KW-0002">3D-structure</keyword>
<keyword id="KW-0997">Cell inner membrane</keyword>
<keyword id="KW-1003">Cell membrane</keyword>
<keyword id="KW-0175">Coiled coil</keyword>
<keyword id="KW-0342">GTP-binding</keyword>
<keyword id="KW-0378">Hydrolase</keyword>
<keyword id="KW-0446">Lipid-binding</keyword>
<keyword id="KW-0472">Membrane</keyword>
<keyword id="KW-0547">Nucleotide-binding</keyword>
<keyword id="KW-1185">Reference proteome</keyword>
<feature type="chain" id="PRO_0000425573" description="Bacterial dynamin-like protein">
    <location>
        <begin position="1"/>
        <end position="693"/>
    </location>
</feature>
<feature type="topological domain" description="Cytoplasmic" evidence="1">
    <location>
        <begin position="1"/>
        <end position="521"/>
    </location>
</feature>
<feature type="intramembrane region" evidence="6 7">
    <location>
        <begin position="522"/>
        <end position="574"/>
    </location>
</feature>
<feature type="topological domain" description="Cytoplasmic" evidence="1">
    <location>
        <begin position="575"/>
        <end position="693"/>
    </location>
</feature>
<feature type="domain" description="Dynamin-type G" evidence="2">
    <location>
        <begin position="66"/>
        <end position="313"/>
    </location>
</feature>
<feature type="region of interest" description="G1 motif" evidence="2">
    <location>
        <begin position="76"/>
        <end position="83"/>
    </location>
</feature>
<feature type="region of interest" description="G2 motif" evidence="2">
    <location>
        <begin position="102"/>
        <end position="103"/>
    </location>
</feature>
<feature type="region of interest" description="G3 motif" evidence="2">
    <location>
        <begin position="180"/>
        <end position="183"/>
    </location>
</feature>
<feature type="region of interest" description="G4 motif" evidence="2">
    <location>
        <begin position="238"/>
        <end position="241"/>
    </location>
</feature>
<feature type="region of interest" description="G5 motif" evidence="2">
    <location>
        <position position="268"/>
    </location>
</feature>
<feature type="region of interest" description="Middle domain" evidence="6 7">
    <location>
        <begin position="311"/>
        <end position="571"/>
    </location>
</feature>
<feature type="region of interest" description="Paddle domain" evidence="6 7">
    <location>
        <begin position="572"/>
        <end position="606"/>
    </location>
</feature>
<feature type="region of interest" description="GED" evidence="6 7">
    <location>
        <begin position="607"/>
        <end position="693"/>
    </location>
</feature>
<feature type="coiled-coil region" evidence="1">
    <location>
        <begin position="347"/>
        <end position="378"/>
    </location>
</feature>
<feature type="coiled-coil region" evidence="1">
    <location>
        <begin position="661"/>
        <end position="688"/>
    </location>
</feature>
<feature type="binding site" evidence="3 8">
    <location>
        <begin position="79"/>
        <end position="84"/>
    </location>
    <ligand>
        <name>GTP</name>
        <dbReference type="ChEBI" id="CHEBI:37565"/>
    </ligand>
</feature>
<feature type="binding site" evidence="3 8">
    <location>
        <begin position="235"/>
        <end position="241"/>
    </location>
    <ligand>
        <name>GTP</name>
        <dbReference type="ChEBI" id="CHEBI:37565"/>
    </ligand>
</feature>
<feature type="binding site" evidence="3 8">
    <location>
        <begin position="292"/>
        <end position="293"/>
    </location>
    <ligand>
        <name>GTP</name>
        <dbReference type="ChEBI" id="CHEBI:37565"/>
    </ligand>
</feature>
<feature type="mutagenesis site" description="15-fold reduction of GTP hydrolysis." evidence="3">
    <original>K</original>
    <variation>A</variation>
    <location>
        <position position="82"/>
    </location>
</feature>
<feature type="mutagenesis site" description="No lipid-binding." evidence="4">
    <original>LL</original>
    <variation>EE</variation>
    <location>
        <begin position="576"/>
        <end position="577"/>
    </location>
</feature>
<feature type="mutagenesis site" description="No lipid-binding." evidence="4">
    <original>F</original>
    <variation>E</variation>
    <location>
        <position position="583"/>
    </location>
</feature>
<feature type="helix" evidence="12">
    <location>
        <begin position="6"/>
        <end position="39"/>
    </location>
</feature>
<feature type="turn" evidence="12">
    <location>
        <begin position="40"/>
        <end position="46"/>
    </location>
</feature>
<feature type="helix" evidence="12">
    <location>
        <begin position="52"/>
        <end position="67"/>
    </location>
</feature>
<feature type="strand" evidence="12">
    <location>
        <begin position="70"/>
        <end position="75"/>
    </location>
</feature>
<feature type="helix" evidence="12">
    <location>
        <begin position="82"/>
        <end position="90"/>
    </location>
</feature>
<feature type="turn" evidence="12">
    <location>
        <begin position="101"/>
        <end position="103"/>
    </location>
</feature>
<feature type="strand" evidence="12">
    <location>
        <begin position="107"/>
        <end position="111"/>
    </location>
</feature>
<feature type="strand" evidence="12">
    <location>
        <begin position="116"/>
        <end position="124"/>
    </location>
</feature>
<feature type="strand" evidence="12">
    <location>
        <begin position="129"/>
        <end position="131"/>
    </location>
</feature>
<feature type="helix" evidence="12">
    <location>
        <begin position="132"/>
        <end position="138"/>
    </location>
</feature>
<feature type="helix" evidence="12">
    <location>
        <begin position="143"/>
        <end position="150"/>
    </location>
</feature>
<feature type="turn" evidence="11">
    <location>
        <begin position="151"/>
        <end position="153"/>
    </location>
</feature>
<feature type="strand" evidence="12">
    <location>
        <begin position="160"/>
        <end position="167"/>
    </location>
</feature>
<feature type="helix" evidence="12">
    <location>
        <begin position="170"/>
        <end position="173"/>
    </location>
</feature>
<feature type="strand" evidence="12">
    <location>
        <begin position="175"/>
        <end position="180"/>
    </location>
</feature>
<feature type="helix" evidence="12">
    <location>
        <begin position="184"/>
        <end position="188"/>
    </location>
</feature>
<feature type="helix" evidence="12">
    <location>
        <begin position="191"/>
        <end position="194"/>
    </location>
</feature>
<feature type="helix" evidence="12">
    <location>
        <begin position="196"/>
        <end position="199"/>
    </location>
</feature>
<feature type="strand" evidence="12">
    <location>
        <begin position="200"/>
        <end position="209"/>
    </location>
</feature>
<feature type="helix" evidence="12">
    <location>
        <begin position="216"/>
        <end position="225"/>
    </location>
</feature>
<feature type="turn" evidence="12">
    <location>
        <begin position="226"/>
        <end position="228"/>
    </location>
</feature>
<feature type="strand" evidence="12">
    <location>
        <begin position="233"/>
        <end position="238"/>
    </location>
</feature>
<feature type="helix" evidence="12">
    <location>
        <begin position="240"/>
        <end position="246"/>
    </location>
</feature>
<feature type="strand" evidence="11">
    <location>
        <begin position="247"/>
        <end position="249"/>
    </location>
</feature>
<feature type="helix" evidence="12">
    <location>
        <begin position="253"/>
        <end position="271"/>
    </location>
</feature>
<feature type="helix" evidence="12">
    <location>
        <begin position="272"/>
        <end position="275"/>
    </location>
</feature>
<feature type="strand" evidence="12">
    <location>
        <begin position="276"/>
        <end position="279"/>
    </location>
</feature>
<feature type="helix" evidence="12">
    <location>
        <begin position="283"/>
        <end position="285"/>
    </location>
</feature>
<feature type="strand" evidence="12">
    <location>
        <begin position="287"/>
        <end position="289"/>
    </location>
</feature>
<feature type="helix" evidence="12">
    <location>
        <begin position="292"/>
        <end position="301"/>
    </location>
</feature>
<feature type="helix" evidence="12">
    <location>
        <begin position="312"/>
        <end position="325"/>
    </location>
</feature>
<feature type="helix" evidence="12">
    <location>
        <begin position="327"/>
        <end position="357"/>
    </location>
</feature>
<feature type="helix" evidence="12">
    <location>
        <begin position="362"/>
        <end position="370"/>
    </location>
</feature>
<feature type="helix" evidence="12">
    <location>
        <begin position="372"/>
        <end position="409"/>
    </location>
</feature>
<feature type="turn" evidence="12">
    <location>
        <begin position="410"/>
        <end position="415"/>
    </location>
</feature>
<feature type="helix" evidence="12">
    <location>
        <begin position="416"/>
        <end position="419"/>
    </location>
</feature>
<feature type="turn" evidence="12">
    <location>
        <begin position="420"/>
        <end position="422"/>
    </location>
</feature>
<feature type="helix" evidence="12">
    <location>
        <begin position="428"/>
        <end position="432"/>
    </location>
</feature>
<feature type="helix" evidence="12">
    <location>
        <begin position="436"/>
        <end position="497"/>
    </location>
</feature>
<feature type="helix" evidence="12">
    <location>
        <begin position="516"/>
        <end position="522"/>
    </location>
</feature>
<feature type="strand" evidence="11">
    <location>
        <begin position="527"/>
        <end position="534"/>
    </location>
</feature>
<feature type="strand" evidence="11">
    <location>
        <begin position="536"/>
        <end position="538"/>
    </location>
</feature>
<feature type="helix" evidence="12">
    <location>
        <begin position="544"/>
        <end position="553"/>
    </location>
</feature>
<feature type="turn" evidence="12">
    <location>
        <begin position="559"/>
        <end position="561"/>
    </location>
</feature>
<feature type="helix" evidence="12">
    <location>
        <begin position="562"/>
        <end position="578"/>
    </location>
</feature>
<feature type="turn" evidence="12">
    <location>
        <begin position="579"/>
        <end position="582"/>
    </location>
</feature>
<feature type="helix" evidence="12">
    <location>
        <begin position="586"/>
        <end position="655"/>
    </location>
</feature>
<feature type="helix" evidence="12">
    <location>
        <begin position="660"/>
        <end position="693"/>
    </location>
</feature>
<comment type="function">
    <text evidence="3">Dynamin-related GTPase probably involved in membrane remodeling. Lipid and nucleotide-binding are thought to induce a large intramolecular rearrangement, leading to assembly on lipid bilayers and possible membrane curving. In the presence of the non-hydrolyzable GTP analog GMP-PNP self-assembles on a lipid bilayer; this does not stimulate subsequent GTPase activity. Does not bind lipids in the presence of GDP; perhaps GTP hydrolysis disrupts membrane-binding.</text>
</comment>
<comment type="catalytic activity">
    <reaction evidence="3">
        <text>GTP + H2O = GDP + phosphate + H(+)</text>
        <dbReference type="Rhea" id="RHEA:19669"/>
        <dbReference type="ChEBI" id="CHEBI:15377"/>
        <dbReference type="ChEBI" id="CHEBI:15378"/>
        <dbReference type="ChEBI" id="CHEBI:37565"/>
        <dbReference type="ChEBI" id="CHEBI:43474"/>
        <dbReference type="ChEBI" id="CHEBI:58189"/>
        <dbReference type="EC" id="3.6.5.5"/>
    </reaction>
</comment>
<comment type="biophysicochemical properties">
    <kinetics>
        <KM evidence="3">68.6 uM for GTP</KM>
        <text evidence="3">kcat is 0.53 min(-1).</text>
    </kinetics>
</comment>
<comment type="subunit">
    <text evidence="3">Homodimer. Self-assembles in the presence of GMP-PNP and liposomes, and probably also in the presence of GTP.</text>
</comment>
<comment type="interaction">
    <interactant intactId="EBI-15613218">
        <id>B2IZD3</id>
    </interactant>
    <interactant intactId="EBI-15613218">
        <id>B2IZD3</id>
        <label>Npun_R6513</label>
    </interactant>
    <organismsDiffer>false</organismsDiffer>
    <experiments>2</experiments>
</comment>
<comment type="subcellular location">
    <subcellularLocation>
        <location evidence="6">Cell inner membrane</location>
        <topology evidence="6">Peripheral membrane protein</topology>
    </subcellularLocation>
    <text evidence="7">Probably inserts into the outer leaflet of the membrane only (Probable). Forms foci localized in the cell periphery, and occasionally in the cell interior.</text>
</comment>
<comment type="developmental stage">
    <text evidence="3">Detected in vegetatively growing cells (at protein level).</text>
</comment>
<comment type="domain">
    <text evidence="3 4">The GTPase domain dimerizes and forms the BDLP tube surface, the middle and GED domains are elongated and involved in self-assembly, while the paddle region inserts into the outer leaflet of the membrane, possibly promoting membrane curvature.</text>
</comment>
<comment type="similarity">
    <text evidence="2">Belongs to the TRAFAC class dynamin-like GTPase superfamily. Dynamin/Fzo/YdjA family. Mitofusin subfamily.</text>
</comment>
<proteinExistence type="evidence at protein level"/>
<name>BDLP_NOSP7</name>
<protein>
    <recommendedName>
        <fullName evidence="5">Bacterial dynamin-like protein</fullName>
        <shortName>BDLP</shortName>
        <ecNumber evidence="3">3.6.5.5</ecNumber>
    </recommendedName>
</protein>
<reference key="1">
    <citation type="journal article" date="2013" name="Plant Physiol.">
        <title>A Nostoc punctiforme Sugar Transporter Necessary to Establish a Cyanobacterium-Plant Symbiosis.</title>
        <authorList>
            <person name="Ekman M."/>
            <person name="Picossi S."/>
            <person name="Campbell E.L."/>
            <person name="Meeks J.C."/>
            <person name="Flores E."/>
        </authorList>
    </citation>
    <scope>NUCLEOTIDE SEQUENCE [LARGE SCALE GENOMIC DNA]</scope>
    <source>
        <strain>ATCC 29133 / PCC 73102</strain>
    </source>
</reference>
<reference evidence="8 9" key="2">
    <citation type="journal article" date="2006" name="Nature">
        <title>A bacterial dynamin-like protein.</title>
        <authorList>
            <person name="Low H.H."/>
            <person name="Lowe J."/>
        </authorList>
    </citation>
    <scope>X-RAY CRYSTALLOGRAPHY (3.00 ANGSTROMS) OF APOPROTEIN AND IN COMPLEX WITH GTP ANALOG</scope>
    <scope>FUNCTION</scope>
    <scope>CATALYTIC ACTIVITY</scope>
    <scope>BIOPHYSICOCHEMICAL PROPERTIES</scope>
    <scope>SUBUNIT</scope>
    <scope>SUBCELLULAR LOCATION</scope>
    <scope>DEVELOPMENTAL STAGE</scope>
    <scope>DOMAIN</scope>
    <scope>GTP-BINDING</scope>
    <scope>LIPID-BINDING</scope>
    <scope>MUTAGENESIS OF LYS-82</scope>
    <source>
        <strain>ATCC 29133 / PCC 73102</strain>
    </source>
</reference>
<reference evidence="10" key="3">
    <citation type="journal article" date="2009" name="Cell">
        <title>Structure of a bacterial dynamin-like protein lipid tube provides a mechanism for assembly and membrane curving.</title>
        <authorList>
            <person name="Low H.H."/>
            <person name="Sachse C."/>
            <person name="Amos L.A."/>
            <person name="Lowe J."/>
        </authorList>
    </citation>
    <scope>STRUCTURE BY ELECTRON MICROSCOPY (9.00 ANGSTROMS) BOUND TO LIPID TUBES</scope>
    <scope>DOMAIN</scope>
    <scope>LIPID-BINDING</scope>
    <scope>MUTAGENESIS OF 576-LEU-LEU-577 AND PHE-583</scope>
</reference>
<organism>
    <name type="scientific">Nostoc punctiforme (strain ATCC 29133 / PCC 73102)</name>
    <dbReference type="NCBI Taxonomy" id="63737"/>
    <lineage>
        <taxon>Bacteria</taxon>
        <taxon>Bacillati</taxon>
        <taxon>Cyanobacteriota</taxon>
        <taxon>Cyanophyceae</taxon>
        <taxon>Nostocales</taxon>
        <taxon>Nostocaceae</taxon>
        <taxon>Nostoc</taxon>
    </lineage>
</organism>
<accession>B2IZD3</accession>
<sequence length="693" mass="78348">MVNQVATDRFIQDLERVAQVRSEMSVCLNKLAETINKAELAGDSSSGKLSLERDIEDITIASKNLQQGVFRLLVLGDMKRGKSTFLNALIGENLLPSDVNPCTAVLTVLRYGPEKKVTIHFNDGKSPQQLDFQNFKYKYTIDPAEAKKLEQEKKQAFPDVDYAVVEYPLTLLQKGIEIVDSPGLNDTEARNELSLGYVNNCHAILFVMRASQPCTLGERRYLENYIKGRGLTVFFLVNAWDQVRESLIDPDDVEELQASENRLRQVFNANLAEYCTVEGQNIYDERVFELSSIQALRRRLKNPQADLDGTGFPKFMDSLNTFLTRERAIAELRQVRTLARLACNHTREAVARRIPLLEQDVNELKKRIDSVEPEFNKLTGIRDEFQKEIINTRDTQARTISESFRSYVLNLGNTFENDFLRYQPELNLFDFLSSGKREAFNAALQKAFEQYITDKSAAWTLTAEKDINAAFKELSRSASQYGASYNQITDQITEKLTGKDVKVHTTTTAEEDNSPGWAKWAMGLLSLSKGNLAGFALAGAGFDWKNILLNYFTVIGIGGIITAVTGILLGPIGFALLGLGVGFLQADQARRELVKTAKKELVKHLPQVAHEQSQVVYNAVKECFDSYEREVSKRINDDIVSRKSELDNLVKQKQTREINRESEFNRLKNLQEDVIAQLQKIEAAYSNLLAYYS</sequence>